<protein>
    <recommendedName>
        <fullName evidence="18">Tumor necrosis factor receptor superfamily member 8</fullName>
    </recommendedName>
    <alternativeName>
        <fullName>CD30L receptor</fullName>
    </alternativeName>
    <alternativeName>
        <fullName>Ki-1 antigen</fullName>
    </alternativeName>
    <alternativeName>
        <fullName>Lymphocyte activation antigen CD30</fullName>
    </alternativeName>
    <cdAntigenName evidence="14">CD30</cdAntigenName>
</protein>
<comment type="function">
    <text evidence="6 9">Receptor for TNFSF8/CD30L (PubMed:8391931). May play a role in the regulation of cellular growth and transformation of activated lymphoblasts. Regulates gene expression through activation of NF-kappa-B (PubMed:8999898).</text>
</comment>
<comment type="subunit">
    <text evidence="4 7 9 10 11">Interacts with TRAF1, TRAF2, TRAF3 and TRAF5.</text>
</comment>
<comment type="subcellular location">
    <molecule>Isoform 1</molecule>
    <subcellularLocation>
        <location evidence="6 17">Cell membrane</location>
        <topology evidence="1">Single-pass type I membrane protein</topology>
    </subcellularLocation>
</comment>
<comment type="subcellular location">
    <molecule>Isoform 2</molecule>
    <subcellularLocation>
        <location evidence="8">Cytoplasm</location>
    </subcellularLocation>
</comment>
<comment type="alternative products">
    <event type="alternative splicing"/>
    <event type="alternative initiation"/>
    <isoform>
        <id>P28908-1</id>
        <name>1</name>
        <name>Long</name>
        <sequence type="displayed"/>
    </isoform>
    <isoform>
        <id>P28908-2</id>
        <name>2</name>
        <name>Cytoplasmic</name>
        <name>Short</name>
        <name>C30V</name>
        <sequence type="described" ref="VSP_018900"/>
    </isoform>
    <isoform>
        <id>P28908-3</id>
        <name>3</name>
        <sequence type="described" ref="VSP_055032 VSP_055033"/>
    </isoform>
</comment>
<comment type="tissue specificity">
    <molecule>Isoform 2</molecule>
    <text evidence="8">Detected in alveolar macrophages (at protein level).</text>
</comment>
<comment type="PTM">
    <text evidence="8 16">Phosphorylated on serine and tyrosine residues (Probable). Isoform 2 is constitutively phosphorylated (PubMed:8839832).</text>
</comment>
<comment type="miscellaneous">
    <text>Most specific Hodgkin disease associated antigen.</text>
</comment>
<comment type="similarity">
    <text evidence="16">Belongs to the TNFR8 family.</text>
</comment>
<accession>P28908</accession>
<accession>B1AN79</accession>
<accession>B9EGD9</accession>
<accession>D3YTD8</accession>
<accession>Q6P4D9</accession>
<feature type="signal peptide">
    <location>
        <begin position="1"/>
        <end position="18"/>
    </location>
</feature>
<feature type="chain" id="PRO_0000034573" description="Tumor necrosis factor receptor superfamily member 8">
    <location>
        <begin position="19"/>
        <end position="595"/>
    </location>
</feature>
<feature type="topological domain" description="Extracellular" evidence="16">
    <location>
        <begin position="19"/>
        <end position="385"/>
    </location>
</feature>
<feature type="transmembrane region" description="Helical" evidence="1">
    <location>
        <begin position="386"/>
        <end position="406"/>
    </location>
</feature>
<feature type="topological domain" description="Cytoplasmic" evidence="16">
    <location>
        <begin position="407"/>
        <end position="595"/>
    </location>
</feature>
<feature type="repeat" description="TNFR-Cys 1">
    <location>
        <begin position="28"/>
        <end position="66"/>
    </location>
</feature>
<feature type="repeat" description="TNFR-Cys 2">
    <location>
        <begin position="68"/>
        <end position="106"/>
    </location>
</feature>
<feature type="repeat" description="TNFR-Cys 3">
    <location>
        <begin position="107"/>
        <end position="150"/>
    </location>
</feature>
<feature type="repeat" description="TNFR-Cys 4">
    <location>
        <begin position="205"/>
        <end position="241"/>
    </location>
</feature>
<feature type="repeat" description="TNFR-Cys 5">
    <location>
        <begin position="243"/>
        <end position="281"/>
    </location>
</feature>
<feature type="repeat" description="TNFR-Cys 6">
    <location>
        <begin position="282"/>
        <end position="325"/>
    </location>
</feature>
<feature type="region of interest" description="Disordered" evidence="3">
    <location>
        <begin position="167"/>
        <end position="238"/>
    </location>
</feature>
<feature type="region of interest" description="Disordered" evidence="3">
    <location>
        <begin position="323"/>
        <end position="355"/>
    </location>
</feature>
<feature type="region of interest" description="Disordered" evidence="3">
    <location>
        <begin position="438"/>
        <end position="457"/>
    </location>
</feature>
<feature type="region of interest" description="Disordered" evidence="3">
    <location>
        <begin position="485"/>
        <end position="509"/>
    </location>
</feature>
<feature type="region of interest" description="Disordered" evidence="3">
    <location>
        <begin position="536"/>
        <end position="595"/>
    </location>
</feature>
<feature type="compositionally biased region" description="Low complexity" evidence="3">
    <location>
        <begin position="179"/>
        <end position="194"/>
    </location>
</feature>
<feature type="compositionally biased region" description="Polar residues" evidence="3">
    <location>
        <begin position="346"/>
        <end position="355"/>
    </location>
</feature>
<feature type="compositionally biased region" description="Polar residues" evidence="3">
    <location>
        <begin position="443"/>
        <end position="452"/>
    </location>
</feature>
<feature type="compositionally biased region" description="Basic and acidic residues" evidence="3">
    <location>
        <begin position="499"/>
        <end position="509"/>
    </location>
</feature>
<feature type="modified residue" description="Phosphoserine" evidence="21">
    <location>
        <position position="438"/>
    </location>
</feature>
<feature type="modified residue" description="Phosphoserine" evidence="19 20 21">
    <location>
        <position position="452"/>
    </location>
</feature>
<feature type="glycosylation site" description="N-linked (GlcNAc...) asparagine" evidence="1">
    <location>
        <position position="32"/>
    </location>
</feature>
<feature type="glycosylation site" description="N-linked (GlcNAc...) asparagine" evidence="1">
    <location>
        <position position="101"/>
    </location>
</feature>
<feature type="glycosylation site" description="N-linked (GlcNAc...) asparagine" evidence="1">
    <location>
        <position position="276"/>
    </location>
</feature>
<feature type="glycosylation site" description="N-linked (GlcNAc...) asparagine" evidence="1">
    <location>
        <position position="336"/>
    </location>
</feature>
<feature type="disulfide bond" evidence="2">
    <location>
        <begin position="29"/>
        <end position="44"/>
    </location>
</feature>
<feature type="disulfide bond" evidence="2">
    <location>
        <begin position="45"/>
        <end position="58"/>
    </location>
</feature>
<feature type="disulfide bond" evidence="2">
    <location>
        <begin position="48"/>
        <end position="65"/>
    </location>
</feature>
<feature type="disulfide bond" evidence="2">
    <location>
        <begin position="69"/>
        <end position="81"/>
    </location>
</feature>
<feature type="disulfide bond" evidence="2">
    <location>
        <begin position="84"/>
        <end position="98"/>
    </location>
</feature>
<feature type="disulfide bond" evidence="2">
    <location>
        <begin position="87"/>
        <end position="106"/>
    </location>
</feature>
<feature type="disulfide bond" evidence="2">
    <location>
        <begin position="108"/>
        <end position="122"/>
    </location>
</feature>
<feature type="disulfide bond" evidence="2">
    <location>
        <begin position="131"/>
        <end position="149"/>
    </location>
</feature>
<feature type="disulfide bond" evidence="2">
    <location>
        <begin position="233"/>
        <end position="240"/>
    </location>
</feature>
<feature type="disulfide bond" evidence="2">
    <location>
        <begin position="244"/>
        <end position="256"/>
    </location>
</feature>
<feature type="disulfide bond" evidence="2">
    <location>
        <begin position="259"/>
        <end position="273"/>
    </location>
</feature>
<feature type="disulfide bond" evidence="2">
    <location>
        <begin position="262"/>
        <end position="281"/>
    </location>
</feature>
<feature type="disulfide bond" evidence="2">
    <location>
        <begin position="283"/>
        <end position="297"/>
    </location>
</feature>
<feature type="disulfide bond" evidence="2">
    <location>
        <begin position="289"/>
        <end position="300"/>
    </location>
</feature>
<feature type="splice variant" id="VSP_018900" description="In isoform 2." evidence="13 15">
    <location>
        <begin position="1"/>
        <end position="463"/>
    </location>
</feature>
<feature type="splice variant" id="VSP_055032" description="In isoform 3." evidence="13">
    <location>
        <begin position="1"/>
        <end position="111"/>
    </location>
</feature>
<feature type="splice variant" id="VSP_055033" description="In isoform 3." evidence="13">
    <location>
        <position position="446"/>
    </location>
</feature>
<feature type="sequence variant" id="VAR_054213" description="In dbSNP:rs2230624.">
    <original>C</original>
    <variation>F</variation>
    <location>
        <position position="273"/>
    </location>
</feature>
<feature type="sequence variant" id="VAR_018753" description="In dbSNP:rs2230624." evidence="12">
    <original>C</original>
    <variation>Y</variation>
    <location>
        <position position="273"/>
    </location>
</feature>
<feature type="sequence variant" id="VAR_055257" description="In dbSNP:rs1763642." evidence="5">
    <original>C</original>
    <variation>R</variation>
    <location>
        <position position="297"/>
    </location>
</feature>
<feature type="sequence variant" id="VAR_055258" description="In dbSNP:rs2275170.">
    <original>P</original>
    <variation>S</variation>
    <location>
        <position position="314"/>
    </location>
</feature>
<feature type="sequence variant" id="VAR_018754" description="In dbSNP:rs2230625." evidence="12">
    <original>S</original>
    <variation>G</variation>
    <location>
        <position position="402"/>
    </location>
</feature>
<feature type="sequence variant" id="VAR_055259" description="In dbSNP:rs35511003.">
    <original>Q</original>
    <variation>R</variation>
    <location>
        <position position="466"/>
    </location>
</feature>
<proteinExistence type="evidence at protein level"/>
<organism>
    <name type="scientific">Homo sapiens</name>
    <name type="common">Human</name>
    <dbReference type="NCBI Taxonomy" id="9606"/>
    <lineage>
        <taxon>Eukaryota</taxon>
        <taxon>Metazoa</taxon>
        <taxon>Chordata</taxon>
        <taxon>Craniata</taxon>
        <taxon>Vertebrata</taxon>
        <taxon>Euteleostomi</taxon>
        <taxon>Mammalia</taxon>
        <taxon>Eutheria</taxon>
        <taxon>Euarchontoglires</taxon>
        <taxon>Primates</taxon>
        <taxon>Haplorrhini</taxon>
        <taxon>Catarrhini</taxon>
        <taxon>Hominidae</taxon>
        <taxon>Homo</taxon>
    </lineage>
</organism>
<keyword id="KW-0002">3D-structure</keyword>
<keyword id="KW-0024">Alternative initiation</keyword>
<keyword id="KW-0025">Alternative splicing</keyword>
<keyword id="KW-1003">Cell membrane</keyword>
<keyword id="KW-0963">Cytoplasm</keyword>
<keyword id="KW-1015">Disulfide bond</keyword>
<keyword id="KW-0325">Glycoprotein</keyword>
<keyword id="KW-0472">Membrane</keyword>
<keyword id="KW-0597">Phosphoprotein</keyword>
<keyword id="KW-1267">Proteomics identification</keyword>
<keyword id="KW-0675">Receptor</keyword>
<keyword id="KW-1185">Reference proteome</keyword>
<keyword id="KW-0677">Repeat</keyword>
<keyword id="KW-0732">Signal</keyword>
<keyword id="KW-0812">Transmembrane</keyword>
<keyword id="KW-1133">Transmembrane helix</keyword>
<evidence type="ECO:0000255" key="1"/>
<evidence type="ECO:0000255" key="2">
    <source>
        <dbReference type="PROSITE-ProRule" id="PRU00206"/>
    </source>
</evidence>
<evidence type="ECO:0000256" key="3">
    <source>
        <dbReference type="SAM" id="MobiDB-lite"/>
    </source>
</evidence>
<evidence type="ECO:0000269" key="4">
    <source>
    </source>
</evidence>
<evidence type="ECO:0000269" key="5">
    <source>
    </source>
</evidence>
<evidence type="ECO:0000269" key="6">
    <source>
    </source>
</evidence>
<evidence type="ECO:0000269" key="7">
    <source>
    </source>
</evidence>
<evidence type="ECO:0000269" key="8">
    <source>
    </source>
</evidence>
<evidence type="ECO:0000269" key="9">
    <source>
    </source>
</evidence>
<evidence type="ECO:0000269" key="10">
    <source>
    </source>
</evidence>
<evidence type="ECO:0000269" key="11">
    <source>
    </source>
</evidence>
<evidence type="ECO:0000269" key="12">
    <source ref="5"/>
</evidence>
<evidence type="ECO:0000303" key="13">
    <source>
    </source>
</evidence>
<evidence type="ECO:0000303" key="14">
    <source>
    </source>
</evidence>
<evidence type="ECO:0000303" key="15">
    <source>
    </source>
</evidence>
<evidence type="ECO:0000305" key="16"/>
<evidence type="ECO:0000305" key="17">
    <source>
    </source>
</evidence>
<evidence type="ECO:0000312" key="18">
    <source>
        <dbReference type="HGNC" id="HGNC:11923"/>
    </source>
</evidence>
<evidence type="ECO:0007744" key="19">
    <source>
    </source>
</evidence>
<evidence type="ECO:0007744" key="20">
    <source>
    </source>
</evidence>
<evidence type="ECO:0007744" key="21">
    <source>
    </source>
</evidence>
<dbReference type="EMBL" id="M83554">
    <property type="protein sequence ID" value="AAA51947.1"/>
    <property type="molecule type" value="mRNA"/>
</dbReference>
<dbReference type="EMBL" id="S75768">
    <property type="protein sequence ID" value="AAD14188.1"/>
    <property type="molecule type" value="mRNA"/>
</dbReference>
<dbReference type="EMBL" id="D86042">
    <property type="protein sequence ID" value="BAA12973.1"/>
    <property type="molecule type" value="mRNA"/>
</dbReference>
<dbReference type="EMBL" id="AJ289159">
    <property type="protein sequence ID" value="CAC16652.1"/>
    <property type="molecule type" value="Genomic_DNA"/>
</dbReference>
<dbReference type="EMBL" id="AY498860">
    <property type="protein sequence ID" value="AAR32099.1"/>
    <property type="molecule type" value="Genomic_DNA"/>
</dbReference>
<dbReference type="EMBL" id="AL357835">
    <property type="status" value="NOT_ANNOTATED_CDS"/>
    <property type="molecule type" value="Genomic_DNA"/>
</dbReference>
<dbReference type="EMBL" id="BC063482">
    <property type="protein sequence ID" value="AAH63482.2"/>
    <property type="molecule type" value="mRNA"/>
</dbReference>
<dbReference type="EMBL" id="BC136400">
    <property type="protein sequence ID" value="AAI36401.1"/>
    <property type="molecule type" value="mRNA"/>
</dbReference>
<dbReference type="CCDS" id="CCDS144.1">
    <molecule id="P28908-1"/>
</dbReference>
<dbReference type="CCDS" id="CCDS59989.1">
    <molecule id="P28908-3"/>
</dbReference>
<dbReference type="PIR" id="A42086">
    <property type="entry name" value="A42086"/>
</dbReference>
<dbReference type="RefSeq" id="NP_001234.3">
    <molecule id="P28908-1"/>
    <property type="nucleotide sequence ID" value="NM_001243.5"/>
</dbReference>
<dbReference type="RefSeq" id="NP_001268359.2">
    <molecule id="P28908-3"/>
    <property type="nucleotide sequence ID" value="NM_001281430.3"/>
</dbReference>
<dbReference type="PDB" id="1D01">
    <property type="method" value="X-ray"/>
    <property type="resolution" value="2.00 A"/>
    <property type="chains" value="G/H/I=576-583"/>
</dbReference>
<dbReference type="PDBsum" id="1D01"/>
<dbReference type="SMR" id="P28908"/>
<dbReference type="BioGRID" id="107381">
    <property type="interactions" value="51"/>
</dbReference>
<dbReference type="CORUM" id="P28908"/>
<dbReference type="DIP" id="DIP-2930N"/>
<dbReference type="ELM" id="P28908"/>
<dbReference type="FunCoup" id="P28908">
    <property type="interactions" value="465"/>
</dbReference>
<dbReference type="IntAct" id="P28908">
    <property type="interactions" value="24"/>
</dbReference>
<dbReference type="STRING" id="9606.ENSP00000263932"/>
<dbReference type="ChEMBL" id="CHEMBL2364161"/>
<dbReference type="DrugBank" id="DB08870">
    <property type="generic name" value="Brentuximab vedotin"/>
</dbReference>
<dbReference type="DrugBank" id="DB05550">
    <property type="generic name" value="Iratumumab"/>
</dbReference>
<dbReference type="DrugBank" id="DB06324">
    <property type="generic name" value="XmAb 2513"/>
</dbReference>
<dbReference type="DrugCentral" id="P28908"/>
<dbReference type="GuidetoPHARMACOLOGY" id="1877"/>
<dbReference type="GlyCosmos" id="P28908">
    <property type="glycosylation" value="4 sites, No reported glycans"/>
</dbReference>
<dbReference type="GlyGen" id="P28908">
    <property type="glycosylation" value="9 sites, 1 O-linked glycan (3 sites)"/>
</dbReference>
<dbReference type="iPTMnet" id="P28908"/>
<dbReference type="PhosphoSitePlus" id="P28908"/>
<dbReference type="SwissPalm" id="P28908"/>
<dbReference type="BioMuta" id="TNFRSF8"/>
<dbReference type="DMDM" id="115978"/>
<dbReference type="jPOST" id="P28908"/>
<dbReference type="MassIVE" id="P28908"/>
<dbReference type="PaxDb" id="9606-ENSP00000263932"/>
<dbReference type="PeptideAtlas" id="P28908"/>
<dbReference type="ProteomicsDB" id="12802"/>
<dbReference type="ProteomicsDB" id="54509">
    <molecule id="P28908-1"/>
</dbReference>
<dbReference type="ProteomicsDB" id="54510">
    <molecule id="P28908-2"/>
</dbReference>
<dbReference type="Pumba" id="P28908"/>
<dbReference type="ABCD" id="P28908">
    <property type="antibodies" value="25 sequenced antibodies"/>
</dbReference>
<dbReference type="Antibodypedia" id="3659">
    <property type="antibodies" value="2486 antibodies from 46 providers"/>
</dbReference>
<dbReference type="DNASU" id="943"/>
<dbReference type="Ensembl" id="ENST00000263932.7">
    <molecule id="P28908-1"/>
    <property type="protein sequence ID" value="ENSP00000263932.2"/>
    <property type="gene ID" value="ENSG00000120949.15"/>
</dbReference>
<dbReference type="Ensembl" id="ENST00000413146.6">
    <molecule id="P28908-2"/>
    <property type="protein sequence ID" value="ENSP00000398337.2"/>
    <property type="gene ID" value="ENSG00000120949.15"/>
</dbReference>
<dbReference type="Ensembl" id="ENST00000417814.3">
    <molecule id="P28908-3"/>
    <property type="protein sequence ID" value="ENSP00000390650.2"/>
    <property type="gene ID" value="ENSG00000120949.15"/>
</dbReference>
<dbReference type="GeneID" id="943"/>
<dbReference type="KEGG" id="hsa:943"/>
<dbReference type="MANE-Select" id="ENST00000263932.7">
    <property type="protein sequence ID" value="ENSP00000263932.2"/>
    <property type="RefSeq nucleotide sequence ID" value="NM_001243.5"/>
    <property type="RefSeq protein sequence ID" value="NP_001234.3"/>
</dbReference>
<dbReference type="UCSC" id="uc001atq.3">
    <molecule id="P28908-1"/>
    <property type="organism name" value="human"/>
</dbReference>
<dbReference type="AGR" id="HGNC:11923"/>
<dbReference type="CTD" id="943"/>
<dbReference type="DisGeNET" id="943"/>
<dbReference type="GeneCards" id="TNFRSF8"/>
<dbReference type="HGNC" id="HGNC:11923">
    <property type="gene designation" value="TNFRSF8"/>
</dbReference>
<dbReference type="HPA" id="ENSG00000120949">
    <property type="expression patterns" value="Tissue enhanced (adipose)"/>
</dbReference>
<dbReference type="MalaCards" id="TNFRSF8"/>
<dbReference type="MIM" id="153243">
    <property type="type" value="gene"/>
</dbReference>
<dbReference type="neXtProt" id="NX_P28908"/>
<dbReference type="OpenTargets" id="ENSG00000120949"/>
<dbReference type="PharmGKB" id="PA36616"/>
<dbReference type="VEuPathDB" id="HostDB:ENSG00000120949"/>
<dbReference type="eggNOG" id="ENOG502SNQ9">
    <property type="taxonomic scope" value="Eukaryota"/>
</dbReference>
<dbReference type="GeneTree" id="ENSGT00510000049215"/>
<dbReference type="HOGENOM" id="CLU_043282_0_0_1"/>
<dbReference type="InParanoid" id="P28908"/>
<dbReference type="OMA" id="CKACVTC"/>
<dbReference type="OrthoDB" id="8633482at2759"/>
<dbReference type="PAN-GO" id="P28908">
    <property type="GO annotations" value="0 GO annotations based on evolutionary models"/>
</dbReference>
<dbReference type="PhylomeDB" id="P28908"/>
<dbReference type="TreeFam" id="TF331157"/>
<dbReference type="PathwayCommons" id="P28908"/>
<dbReference type="Reactome" id="R-HSA-5669034">
    <property type="pathway name" value="TNFs bind their physiological receptors"/>
</dbReference>
<dbReference type="SignaLink" id="P28908"/>
<dbReference type="BioGRID-ORCS" id="943">
    <property type="hits" value="22 hits in 1170 CRISPR screens"/>
</dbReference>
<dbReference type="ChiTaRS" id="TNFRSF8">
    <property type="organism name" value="human"/>
</dbReference>
<dbReference type="EvolutionaryTrace" id="P28908"/>
<dbReference type="GeneWiki" id="CD30"/>
<dbReference type="GenomeRNAi" id="943"/>
<dbReference type="Pharos" id="P28908">
    <property type="development level" value="Tclin"/>
</dbReference>
<dbReference type="PRO" id="PR:P28908"/>
<dbReference type="Proteomes" id="UP000005640">
    <property type="component" value="Chromosome 1"/>
</dbReference>
<dbReference type="RNAct" id="P28908">
    <property type="molecule type" value="protein"/>
</dbReference>
<dbReference type="Bgee" id="ENSG00000120949">
    <property type="expression patterns" value="Expressed in granulocyte and 97 other cell types or tissues"/>
</dbReference>
<dbReference type="ExpressionAtlas" id="P28908">
    <property type="expression patterns" value="baseline and differential"/>
</dbReference>
<dbReference type="GO" id="GO:0005737">
    <property type="term" value="C:cytoplasm"/>
    <property type="evidence" value="ECO:0007669"/>
    <property type="project" value="UniProtKB-SubCell"/>
</dbReference>
<dbReference type="GO" id="GO:0070062">
    <property type="term" value="C:extracellular exosome"/>
    <property type="evidence" value="ECO:0007005"/>
    <property type="project" value="UniProtKB"/>
</dbReference>
<dbReference type="GO" id="GO:0005654">
    <property type="term" value="C:nucleoplasm"/>
    <property type="evidence" value="ECO:0000314"/>
    <property type="project" value="HPA"/>
</dbReference>
<dbReference type="GO" id="GO:0005886">
    <property type="term" value="C:plasma membrane"/>
    <property type="evidence" value="ECO:0000314"/>
    <property type="project" value="HPA"/>
</dbReference>
<dbReference type="GO" id="GO:0002020">
    <property type="term" value="F:protease binding"/>
    <property type="evidence" value="ECO:0000353"/>
    <property type="project" value="BHF-UCL"/>
</dbReference>
<dbReference type="GO" id="GO:0004888">
    <property type="term" value="F:transmembrane signaling receptor activity"/>
    <property type="evidence" value="ECO:0000304"/>
    <property type="project" value="ProtInc"/>
</dbReference>
<dbReference type="GO" id="GO:0071260">
    <property type="term" value="P:cellular response to mechanical stimulus"/>
    <property type="evidence" value="ECO:0000270"/>
    <property type="project" value="UniProtKB"/>
</dbReference>
<dbReference type="GO" id="GO:0008285">
    <property type="term" value="P:negative regulation of cell population proliferation"/>
    <property type="evidence" value="ECO:0000304"/>
    <property type="project" value="ProtInc"/>
</dbReference>
<dbReference type="GO" id="GO:0043065">
    <property type="term" value="P:positive regulation of apoptotic process"/>
    <property type="evidence" value="ECO:0000314"/>
    <property type="project" value="UniProtKB"/>
</dbReference>
<dbReference type="GO" id="GO:0032759">
    <property type="term" value="P:positive regulation of TRAIL production"/>
    <property type="evidence" value="ECO:0000314"/>
    <property type="project" value="UniProtKB"/>
</dbReference>
<dbReference type="GO" id="GO:0032760">
    <property type="term" value="P:positive regulation of tumor necrosis factor production"/>
    <property type="evidence" value="ECO:0000314"/>
    <property type="project" value="UniProtKB"/>
</dbReference>
<dbReference type="GO" id="GO:0007165">
    <property type="term" value="P:signal transduction"/>
    <property type="evidence" value="ECO:0000304"/>
    <property type="project" value="ProtInc"/>
</dbReference>
<dbReference type="CDD" id="cd13409">
    <property type="entry name" value="TNFRSF8"/>
    <property type="match status" value="2"/>
</dbReference>
<dbReference type="FunFam" id="2.10.50.10:FF:000072">
    <property type="entry name" value="TNF receptor superfamily member 8"/>
    <property type="match status" value="1"/>
</dbReference>
<dbReference type="Gene3D" id="2.10.50.10">
    <property type="entry name" value="Tumor Necrosis Factor Receptor, subunit A, domain 2"/>
    <property type="match status" value="2"/>
</dbReference>
<dbReference type="InterPro" id="IPR001368">
    <property type="entry name" value="TNFR/NGFR_Cys_rich_reg"/>
</dbReference>
<dbReference type="InterPro" id="IPR020416">
    <property type="entry name" value="TNFR_8"/>
</dbReference>
<dbReference type="InterPro" id="IPR052862">
    <property type="entry name" value="TNFR_superfamily_member_8"/>
</dbReference>
<dbReference type="InterPro" id="IPR034002">
    <property type="entry name" value="TNFRSF8_N"/>
</dbReference>
<dbReference type="PANTHER" id="PTHR47497">
    <property type="entry name" value="TUMOR NECROSIS FACTOR RECEPTOR SUPERFAMILY MEMBER 8"/>
    <property type="match status" value="1"/>
</dbReference>
<dbReference type="PANTHER" id="PTHR47497:SF1">
    <property type="entry name" value="TUMOR NECROSIS FACTOR RECEPTOR SUPERFAMILY MEMBER 8"/>
    <property type="match status" value="1"/>
</dbReference>
<dbReference type="Pfam" id="PF00020">
    <property type="entry name" value="TNFR_c6"/>
    <property type="match status" value="2"/>
</dbReference>
<dbReference type="PRINTS" id="PR01923">
    <property type="entry name" value="TNFACTORR8"/>
</dbReference>
<dbReference type="SMART" id="SM00208">
    <property type="entry name" value="TNFR"/>
    <property type="match status" value="4"/>
</dbReference>
<dbReference type="SUPFAM" id="SSF57586">
    <property type="entry name" value="TNF receptor-like"/>
    <property type="match status" value="2"/>
</dbReference>
<dbReference type="PROSITE" id="PS00652">
    <property type="entry name" value="TNFR_NGFR_1"/>
    <property type="match status" value="2"/>
</dbReference>
<dbReference type="PROSITE" id="PS50050">
    <property type="entry name" value="TNFR_NGFR_2"/>
    <property type="match status" value="2"/>
</dbReference>
<reference key="1">
    <citation type="journal article" date="1992" name="Cell">
        <title>Molecular cloning and expression of a new member of the nerve growth factor receptor family that is characteristic for Hodgkin's disease.</title>
        <authorList>
            <person name="Duerkop H."/>
            <person name="Latza U."/>
            <person name="Hummel M."/>
            <person name="Eitelbach F."/>
            <person name="Seed B."/>
            <person name="Stein H."/>
        </authorList>
    </citation>
    <scope>NUCLEOTIDE SEQUENCE [MRNA] (ISOFORM 1)</scope>
    <source>
        <tissue>Lymphoid tissue</tissue>
    </source>
</reference>
<reference key="2">
    <citation type="journal article" date="1994" name="Mol. Immunol.">
        <title>Opposite effects of the CD30 ligand are not due to CD30 mutations: results from cDNA cloning and sequence comparison of the CD30 antigen from different sources.</title>
        <authorList>
            <person name="Jung W."/>
            <person name="Krueger S."/>
            <person name="Renner C."/>
            <person name="Gause A."/>
            <person name="Sahin U."/>
            <person name="Trumper L."/>
            <person name="Pfreundschuh M."/>
        </authorList>
    </citation>
    <scope>NUCLEOTIDE SEQUENCE [MRNA] (ISOFORM 1)</scope>
</reference>
<reference key="3">
    <citation type="journal article" date="1996" name="Blood">
        <title>A variant CD30 protein lacking extracellular and transmembrane domains is induced in HL-60 by tetradecanoylphorbol acetate and is expressed in alveolar macrophages.</title>
        <authorList>
            <person name="Horie R."/>
            <person name="Ito K."/>
            <person name="Tatewaki M."/>
            <person name="Nagai M."/>
            <person name="Aizawa S."/>
            <person name="Higashihara M."/>
            <person name="Ishida T."/>
            <person name="Inoue J."/>
            <person name="Takizawa H."/>
            <person name="Watanabe T."/>
        </authorList>
    </citation>
    <scope>NUCLEOTIDE SEQUENCE [MRNA] (ISOFORM 2)</scope>
    <scope>SUBCELLULAR LOCATION</scope>
    <scope>TISSUE SPECIFICITY</scope>
    <scope>PHOSPHORYLATION</scope>
</reference>
<reference key="4">
    <citation type="submission" date="2000-05" db="EMBL/GenBank/DDBJ databases">
        <title>Structure of the Hodgkin's disease associated human CD30 gene and the influence of a microsatellite region on its expression in CD30+ cell lines.</title>
        <authorList>
            <person name="Durkop H."/>
            <person name="Oberbarnscheidt M."/>
            <person name="Latza U."/>
            <person name="Bulfone-Paus S."/>
        </authorList>
    </citation>
    <scope>NUCLEOTIDE SEQUENCE [GENOMIC DNA]</scope>
    <scope>ALTERNATIVE SPLICING (ISOFORM 1)</scope>
    <source>
        <tissue>Placenta</tissue>
    </source>
</reference>
<reference key="5">
    <citation type="submission" date="2003-12" db="EMBL/GenBank/DDBJ databases">
        <authorList>
            <consortium name="NIEHS SNPs program"/>
        </authorList>
    </citation>
    <scope>NUCLEOTIDE SEQUENCE [GENOMIC DNA]</scope>
    <scope>VARIANTS TYR-273 AND GLY-402</scope>
</reference>
<reference key="6">
    <citation type="journal article" date="2006" name="Nature">
        <title>The DNA sequence and biological annotation of human chromosome 1.</title>
        <authorList>
            <person name="Gregory S.G."/>
            <person name="Barlow K.F."/>
            <person name="McLay K.E."/>
            <person name="Kaul R."/>
            <person name="Swarbreck D."/>
            <person name="Dunham A."/>
            <person name="Scott C.E."/>
            <person name="Howe K.L."/>
            <person name="Woodfine K."/>
            <person name="Spencer C.C.A."/>
            <person name="Jones M.C."/>
            <person name="Gillson C."/>
            <person name="Searle S."/>
            <person name="Zhou Y."/>
            <person name="Kokocinski F."/>
            <person name="McDonald L."/>
            <person name="Evans R."/>
            <person name="Phillips K."/>
            <person name="Atkinson A."/>
            <person name="Cooper R."/>
            <person name="Jones C."/>
            <person name="Hall R.E."/>
            <person name="Andrews T.D."/>
            <person name="Lloyd C."/>
            <person name="Ainscough R."/>
            <person name="Almeida J.P."/>
            <person name="Ambrose K.D."/>
            <person name="Anderson F."/>
            <person name="Andrew R.W."/>
            <person name="Ashwell R.I.S."/>
            <person name="Aubin K."/>
            <person name="Babbage A.K."/>
            <person name="Bagguley C.L."/>
            <person name="Bailey J."/>
            <person name="Beasley H."/>
            <person name="Bethel G."/>
            <person name="Bird C.P."/>
            <person name="Bray-Allen S."/>
            <person name="Brown J.Y."/>
            <person name="Brown A.J."/>
            <person name="Buckley D."/>
            <person name="Burton J."/>
            <person name="Bye J."/>
            <person name="Carder C."/>
            <person name="Chapman J.C."/>
            <person name="Clark S.Y."/>
            <person name="Clarke G."/>
            <person name="Clee C."/>
            <person name="Cobley V."/>
            <person name="Collier R.E."/>
            <person name="Corby N."/>
            <person name="Coville G.J."/>
            <person name="Davies J."/>
            <person name="Deadman R."/>
            <person name="Dunn M."/>
            <person name="Earthrowl M."/>
            <person name="Ellington A.G."/>
            <person name="Errington H."/>
            <person name="Frankish A."/>
            <person name="Frankland J."/>
            <person name="French L."/>
            <person name="Garner P."/>
            <person name="Garnett J."/>
            <person name="Gay L."/>
            <person name="Ghori M.R.J."/>
            <person name="Gibson R."/>
            <person name="Gilby L.M."/>
            <person name="Gillett W."/>
            <person name="Glithero R.J."/>
            <person name="Grafham D.V."/>
            <person name="Griffiths C."/>
            <person name="Griffiths-Jones S."/>
            <person name="Grocock R."/>
            <person name="Hammond S."/>
            <person name="Harrison E.S.I."/>
            <person name="Hart E."/>
            <person name="Haugen E."/>
            <person name="Heath P.D."/>
            <person name="Holmes S."/>
            <person name="Holt K."/>
            <person name="Howden P.J."/>
            <person name="Hunt A.R."/>
            <person name="Hunt S.E."/>
            <person name="Hunter G."/>
            <person name="Isherwood J."/>
            <person name="James R."/>
            <person name="Johnson C."/>
            <person name="Johnson D."/>
            <person name="Joy A."/>
            <person name="Kay M."/>
            <person name="Kershaw J.K."/>
            <person name="Kibukawa M."/>
            <person name="Kimberley A.M."/>
            <person name="King A."/>
            <person name="Knights A.J."/>
            <person name="Lad H."/>
            <person name="Laird G."/>
            <person name="Lawlor S."/>
            <person name="Leongamornlert D.A."/>
            <person name="Lloyd D.M."/>
            <person name="Loveland J."/>
            <person name="Lovell J."/>
            <person name="Lush M.J."/>
            <person name="Lyne R."/>
            <person name="Martin S."/>
            <person name="Mashreghi-Mohammadi M."/>
            <person name="Matthews L."/>
            <person name="Matthews N.S.W."/>
            <person name="McLaren S."/>
            <person name="Milne S."/>
            <person name="Mistry S."/>
            <person name="Moore M.J.F."/>
            <person name="Nickerson T."/>
            <person name="O'Dell C.N."/>
            <person name="Oliver K."/>
            <person name="Palmeiri A."/>
            <person name="Palmer S.A."/>
            <person name="Parker A."/>
            <person name="Patel D."/>
            <person name="Pearce A.V."/>
            <person name="Peck A.I."/>
            <person name="Pelan S."/>
            <person name="Phelps K."/>
            <person name="Phillimore B.J."/>
            <person name="Plumb R."/>
            <person name="Rajan J."/>
            <person name="Raymond C."/>
            <person name="Rouse G."/>
            <person name="Saenphimmachak C."/>
            <person name="Sehra H.K."/>
            <person name="Sheridan E."/>
            <person name="Shownkeen R."/>
            <person name="Sims S."/>
            <person name="Skuce C.D."/>
            <person name="Smith M."/>
            <person name="Steward C."/>
            <person name="Subramanian S."/>
            <person name="Sycamore N."/>
            <person name="Tracey A."/>
            <person name="Tromans A."/>
            <person name="Van Helmond Z."/>
            <person name="Wall M."/>
            <person name="Wallis J.M."/>
            <person name="White S."/>
            <person name="Whitehead S.L."/>
            <person name="Wilkinson J.E."/>
            <person name="Willey D.L."/>
            <person name="Williams H."/>
            <person name="Wilming L."/>
            <person name="Wray P.W."/>
            <person name="Wu Z."/>
            <person name="Coulson A."/>
            <person name="Vaudin M."/>
            <person name="Sulston J.E."/>
            <person name="Durbin R.M."/>
            <person name="Hubbard T."/>
            <person name="Wooster R."/>
            <person name="Dunham I."/>
            <person name="Carter N.P."/>
            <person name="McVean G."/>
            <person name="Ross M.T."/>
            <person name="Harrow J."/>
            <person name="Olson M.V."/>
            <person name="Beck S."/>
            <person name="Rogers J."/>
            <person name="Bentley D.R."/>
        </authorList>
    </citation>
    <scope>NUCLEOTIDE SEQUENCE [LARGE SCALE GENOMIC DNA]</scope>
    <scope>VARIANT ARG-297</scope>
</reference>
<reference key="7">
    <citation type="journal article" date="2004" name="Genome Res.">
        <title>The status, quality, and expansion of the NIH full-length cDNA project: the Mammalian Gene Collection (MGC).</title>
        <authorList>
            <consortium name="The MGC Project Team"/>
        </authorList>
    </citation>
    <scope>NUCLEOTIDE SEQUENCE [LARGE SCALE MRNA] (ISOFORMS 2 AND 3)</scope>
    <source>
        <tissue>Blood</tissue>
        <tissue>Testis</tissue>
    </source>
</reference>
<reference key="8">
    <citation type="journal article" date="1993" name="Cell">
        <title>CD30 antigen, a marker for Hodgkin's lymphoma, is a receptor whose ligand defines an emerging family of cytokines with homology to TNF.</title>
        <authorList>
            <person name="Smith C.A."/>
            <person name="Gruess H.-J."/>
            <person name="Davis T."/>
            <person name="Anderson D."/>
            <person name="Farrah T."/>
            <person name="Baker E."/>
            <person name="Sutherland G.R."/>
            <person name="Brannan C.I."/>
            <person name="Copeland N.G."/>
            <person name="Jenkins N.A."/>
            <person name="Grabstein K.H."/>
            <person name="Gliniak B."/>
            <person name="McAlister I.B."/>
            <person name="Fanslow W."/>
            <person name="Alderson M."/>
            <person name="Falk B."/>
            <person name="Gimpsel S."/>
            <person name="Gillis S."/>
            <person name="Din W.S."/>
            <person name="Goodwin R.G."/>
            <person name="Armitage R.J."/>
        </authorList>
    </citation>
    <scope>FUNCTION</scope>
    <scope>SUBCELLULAR LOCATION</scope>
</reference>
<reference key="9">
    <citation type="journal article" date="1996" name="J. Exp. Med.">
        <title>T cell receptor-dependent cell death of T cell hybridomas mediated by the CD30 cytoplasmic domain in association with tumor necrosis factor receptor-associated factors.</title>
        <authorList>
            <person name="Lee S.Y."/>
            <person name="Park C.G."/>
            <person name="Choi Y."/>
        </authorList>
    </citation>
    <scope>INTERACTION WITH TRAF1 AND TRAF2</scope>
</reference>
<reference key="10">
    <citation type="journal article" date="1997" name="Biochem. Biophys. Res. Commun.">
        <title>Binding sites of cytoplasmic effectors TRAF1, 2, and 3 on CD30 and other members of the TNF receptor superfamily.</title>
        <authorList>
            <person name="Boucher L.-M."/>
            <person name="Marengere L.E."/>
            <person name="Lu Y."/>
            <person name="Thukral S."/>
            <person name="Mak T.W."/>
        </authorList>
    </citation>
    <scope>INTERACTION WITH TRAF3</scope>
</reference>
<reference key="11">
    <citation type="journal article" date="1998" name="Gene">
        <title>Cloning and characterization of a cDNA encoding the human homolog of tumor necrosis factor receptor-associated factor 5 (TRAF5).</title>
        <authorList>
            <person name="Mizushima S."/>
            <person name="Fujita M."/>
            <person name="Ishida T."/>
            <person name="Azuma S."/>
            <person name="Kato K."/>
            <person name="Hirai M."/>
            <person name="Otsuka M."/>
            <person name="Yamamoto T."/>
            <person name="Inoue J."/>
        </authorList>
    </citation>
    <scope>INTERACTION WITH TRAF5</scope>
</reference>
<reference key="12">
    <citation type="journal article" date="1997" name="J. Biol. Chem.">
        <title>Tumor necrosis factor receptor-associated factor (TRAF) 5 and TRAF2 are involved in CD30-mediated NFkappaB activation.</title>
        <authorList>
            <person name="Aizawa S."/>
            <person name="Nakano H."/>
            <person name="Ishida T."/>
            <person name="Horie R."/>
            <person name="Nagai M."/>
            <person name="Ito K."/>
            <person name="Yagita H."/>
            <person name="Okumura K."/>
            <person name="Inoue J."/>
            <person name="Watanabe T."/>
        </authorList>
    </citation>
    <scope>FUNCTION</scope>
    <scope>SUBCELLULAR LOCATION</scope>
    <scope>INTERACTION WITH TRAF5</scope>
</reference>
<reference key="13">
    <citation type="journal article" date="2009" name="Sci. Signal.">
        <title>Quantitative phosphoproteomic analysis of T cell receptor signaling reveals system-wide modulation of protein-protein interactions.</title>
        <authorList>
            <person name="Mayya V."/>
            <person name="Lundgren D.H."/>
            <person name="Hwang S.-I."/>
            <person name="Rezaul K."/>
            <person name="Wu L."/>
            <person name="Eng J.K."/>
            <person name="Rodionov V."/>
            <person name="Han D.K."/>
        </authorList>
    </citation>
    <scope>PHOSPHORYLATION [LARGE SCALE ANALYSIS] AT SER-452</scope>
    <scope>IDENTIFICATION BY MASS SPECTROMETRY [LARGE SCALE ANALYSIS]</scope>
    <source>
        <tissue>Leukemic T-cell</tissue>
    </source>
</reference>
<reference key="14">
    <citation type="journal article" date="2011" name="Sci. Signal.">
        <title>System-wide temporal characterization of the proteome and phosphoproteome of human embryonic stem cell differentiation.</title>
        <authorList>
            <person name="Rigbolt K.T."/>
            <person name="Prokhorova T.A."/>
            <person name="Akimov V."/>
            <person name="Henningsen J."/>
            <person name="Johansen P.T."/>
            <person name="Kratchmarova I."/>
            <person name="Kassem M."/>
            <person name="Mann M."/>
            <person name="Olsen J.V."/>
            <person name="Blagoev B."/>
        </authorList>
    </citation>
    <scope>PHOSPHORYLATION [LARGE SCALE ANALYSIS] AT SER-452</scope>
    <scope>IDENTIFICATION BY MASS SPECTROMETRY [LARGE SCALE ANALYSIS]</scope>
</reference>
<reference key="15">
    <citation type="journal article" date="2013" name="J. Proteome Res.">
        <title>Toward a comprehensive characterization of a human cancer cell phosphoproteome.</title>
        <authorList>
            <person name="Zhou H."/>
            <person name="Di Palma S."/>
            <person name="Preisinger C."/>
            <person name="Peng M."/>
            <person name="Polat A.N."/>
            <person name="Heck A.J."/>
            <person name="Mohammed S."/>
        </authorList>
    </citation>
    <scope>PHOSPHORYLATION [LARGE SCALE ANALYSIS] AT SER-438 AND SER-452</scope>
    <scope>IDENTIFICATION BY MASS SPECTROMETRY [LARGE SCALE ANALYSIS]</scope>
    <source>
        <tissue>Erythroleukemia</tissue>
    </source>
</reference>
<reference key="16">
    <citation type="journal article" date="1999" name="Mol. Cell">
        <title>The structural basis for the recognition of diverse receptor sequences by TRAF2.</title>
        <authorList>
            <person name="Ye H."/>
            <person name="Park Y.C."/>
            <person name="Kreishman M."/>
            <person name="Kieff E."/>
            <person name="Wu H."/>
        </authorList>
    </citation>
    <scope>X-RAY CRYSTALLOGRAPHY (2.00 ANGSTROMS) OF 576-583 IN COMPLEX WITH TRAF2</scope>
    <scope>INTERACTION WITH TRAF2</scope>
</reference>
<name>TNR8_HUMAN</name>
<gene>
    <name evidence="18" type="primary">TNFRSF8</name>
    <name evidence="14" type="synonym">CD30</name>
    <name type="synonym">D1S166E</name>
</gene>
<sequence length="595" mass="63747">MRVLLAALGLLFLGALRAFPQDRPFEDTCHGNPSHYYDKAVRRCCYRCPMGLFPTQQCPQRPTDCRKQCEPDYYLDEADRCTACVTCSRDDLVEKTPCAWNSSRVCECRPGMFCSTSAVNSCARCFFHSVCPAGMIVKFPGTAQKNTVCEPASPGVSPACASPENCKEPSSGTIPQAKPTPVSPATSSASTMPVRGGTRLAQEAASKLTRAPDSPSSVGRPSSDPGLSPTQPCPEGSGDCRKQCEPDYYLDEAGRCTACVSCSRDDLVEKTPCAWNSSRTCECRPGMICATSATNSCARCVPYPICAAETVTKPQDMAEKDTTFEAPPLGTQPDCNPTPENGEAPASTSPTQSLLVDSQASKTLPIPTSAPVALSSTGKPVLDAGPVLFWVILVLVVVVGSSAFLLCHRRACRKRIRQKLHLCYPVQTSQPKLELVDSRPRRSSTQLRSGASVTEPVAEERGLMSQPLMETCHSVGAAYLESLPLQDASPAGGPSSPRDLPEPRVSTEHTNNKIEKIYIMKADTVIVGTVKAELPEGRGLAGPAEPELEEELEADHTPHYPEQETEPPLGSCSDVMLSVEEEGKEDPLPTAASGK</sequence>